<sequence>MTALSSVDFCLPEHITPEIFLRDYWQKKPLVIRNGLPEIVGQFEPQDIIELAQNEDVTARLVKTFSDDDWKVFFSPLSEKDFQKLPEKWSVLVQNLEQWSPELGQLWNKFGFIPQWQRDDIMVSYAPKGGSVGKHYDEYDVFLVQGYGHRRWQVGKWCDASTEFKPNQSIRIFDDMGELVIDEVMNPGDILYIPARMAHYGVAEDDCLTFSFGLRYPNLSNLIDGISKGFCHQDPDLNLSEFDLPLRLSQSEQRTGKLADENIQAMKQLLLDKLAHSEAFDTLFKQAVASAVSSRRYELLVSDEMCDPDEVRSILEEDGAFLSQDNNCKLLYTENPLRIYANGEWLDELNIIESEVLKRLSDGESLDWAFLSDLANKTEDPETSMDLLLDSICNWVDDGWALIE</sequence>
<feature type="chain" id="PRO_0000168831" description="Probable ribosomal oxygenase HI_0396">
    <location>
        <begin position="1"/>
        <end position="404"/>
    </location>
</feature>
<feature type="domain" description="JmjC" evidence="3">
    <location>
        <begin position="102"/>
        <end position="231"/>
    </location>
</feature>
<feature type="binding site" evidence="2">
    <location>
        <position position="135"/>
    </location>
    <ligand>
        <name>Fe cation</name>
        <dbReference type="ChEBI" id="CHEBI:24875"/>
        <note>catalytic</note>
    </ligand>
</feature>
<feature type="binding site" evidence="2">
    <location>
        <position position="137"/>
    </location>
    <ligand>
        <name>Fe cation</name>
        <dbReference type="ChEBI" id="CHEBI:24875"/>
        <note>catalytic</note>
    </ligand>
</feature>
<feature type="binding site" evidence="2">
    <location>
        <position position="199"/>
    </location>
    <ligand>
        <name>Fe cation</name>
        <dbReference type="ChEBI" id="CHEBI:24875"/>
        <note>catalytic</note>
    </ligand>
</feature>
<protein>
    <recommendedName>
        <fullName>Probable ribosomal oxygenase HI_0396</fullName>
        <shortName>ROX</shortName>
        <ecNumber>1.14.11.-</ecNumber>
    </recommendedName>
</protein>
<organism>
    <name type="scientific">Haemophilus influenzae (strain ATCC 51907 / DSM 11121 / KW20 / Rd)</name>
    <dbReference type="NCBI Taxonomy" id="71421"/>
    <lineage>
        <taxon>Bacteria</taxon>
        <taxon>Pseudomonadati</taxon>
        <taxon>Pseudomonadota</taxon>
        <taxon>Gammaproteobacteria</taxon>
        <taxon>Pasteurellales</taxon>
        <taxon>Pasteurellaceae</taxon>
        <taxon>Haemophilus</taxon>
    </lineage>
</organism>
<name>Y396_HAEIN</name>
<gene>
    <name type="ordered locus">HI_0396</name>
</gene>
<evidence type="ECO:0000250" key="1"/>
<evidence type="ECO:0000250" key="2">
    <source>
        <dbReference type="UniProtKB" id="P27431"/>
    </source>
</evidence>
<evidence type="ECO:0000255" key="3">
    <source>
        <dbReference type="PROSITE-ProRule" id="PRU00538"/>
    </source>
</evidence>
<evidence type="ECO:0000305" key="4"/>
<proteinExistence type="evidence at protein level"/>
<comment type="function">
    <text evidence="1">Oxygenase that catalyzes the hydroxylation of a ribosomal protein.</text>
</comment>
<comment type="cofactor">
    <cofactor evidence="2">
        <name>Fe(2+)</name>
        <dbReference type="ChEBI" id="CHEBI:29033"/>
    </cofactor>
    <text evidence="2">Binds 1 Fe(2+) ion per subunit.</text>
</comment>
<comment type="similarity">
    <text evidence="4">Belongs to the ROX family.</text>
</comment>
<dbReference type="EC" id="1.14.11.-"/>
<dbReference type="EMBL" id="L42023">
    <property type="protein sequence ID" value="AAC22055.1"/>
    <property type="molecule type" value="Genomic_DNA"/>
</dbReference>
<dbReference type="PIR" id="A64151">
    <property type="entry name" value="A64151"/>
</dbReference>
<dbReference type="RefSeq" id="NP_438558.1">
    <property type="nucleotide sequence ID" value="NC_000907.1"/>
</dbReference>
<dbReference type="SMR" id="P44683"/>
<dbReference type="STRING" id="71421.HI_0396"/>
<dbReference type="DNASU" id="950708"/>
<dbReference type="EnsemblBacteria" id="AAC22055">
    <property type="protein sequence ID" value="AAC22055"/>
    <property type="gene ID" value="HI_0396"/>
</dbReference>
<dbReference type="KEGG" id="hin:HI_0396"/>
<dbReference type="PATRIC" id="fig|71421.8.peg.415"/>
<dbReference type="eggNOG" id="COG2850">
    <property type="taxonomic scope" value="Bacteria"/>
</dbReference>
<dbReference type="HOGENOM" id="CLU_039125_1_0_6"/>
<dbReference type="OrthoDB" id="9764016at2"/>
<dbReference type="PhylomeDB" id="P44683"/>
<dbReference type="BioCyc" id="HINF71421:G1GJ1-411-MONOMER"/>
<dbReference type="Proteomes" id="UP000000579">
    <property type="component" value="Chromosome"/>
</dbReference>
<dbReference type="GO" id="GO:0016706">
    <property type="term" value="F:2-oxoglutarate-dependent dioxygenase activity"/>
    <property type="evidence" value="ECO:0000318"/>
    <property type="project" value="GO_Central"/>
</dbReference>
<dbReference type="GO" id="GO:0046872">
    <property type="term" value="F:metal ion binding"/>
    <property type="evidence" value="ECO:0007669"/>
    <property type="project" value="UniProtKB-KW"/>
</dbReference>
<dbReference type="Gene3D" id="3.40.366.30">
    <property type="entry name" value="50S ribosomal protein L16 arginine hydroxylase, Chain A, Domain 2"/>
    <property type="match status" value="1"/>
</dbReference>
<dbReference type="Gene3D" id="2.60.120.650">
    <property type="entry name" value="Cupin"/>
    <property type="match status" value="1"/>
</dbReference>
<dbReference type="InterPro" id="IPR003347">
    <property type="entry name" value="JmjC_dom"/>
</dbReference>
<dbReference type="InterPro" id="IPR039994">
    <property type="entry name" value="NO66-like"/>
</dbReference>
<dbReference type="InterPro" id="IPR046799">
    <property type="entry name" value="ROXA-like_wH"/>
</dbReference>
<dbReference type="PANTHER" id="PTHR13096">
    <property type="entry name" value="MINA53 MYC INDUCED NUCLEAR ANTIGEN"/>
    <property type="match status" value="1"/>
</dbReference>
<dbReference type="PANTHER" id="PTHR13096:SF8">
    <property type="entry name" value="RIBOSOMAL OXYGENASE 1"/>
    <property type="match status" value="1"/>
</dbReference>
<dbReference type="Pfam" id="PF08007">
    <property type="entry name" value="JmjC_2"/>
    <property type="match status" value="1"/>
</dbReference>
<dbReference type="Pfam" id="PF20514">
    <property type="entry name" value="ROXA-like_wH"/>
    <property type="match status" value="1"/>
</dbReference>
<dbReference type="SMART" id="SM00558">
    <property type="entry name" value="JmjC"/>
    <property type="match status" value="1"/>
</dbReference>
<dbReference type="SUPFAM" id="SSF51197">
    <property type="entry name" value="Clavaminate synthase-like"/>
    <property type="match status" value="1"/>
</dbReference>
<dbReference type="PROSITE" id="PS51184">
    <property type="entry name" value="JMJC"/>
    <property type="match status" value="1"/>
</dbReference>
<accession>P44683</accession>
<keyword id="KW-0223">Dioxygenase</keyword>
<keyword id="KW-0408">Iron</keyword>
<keyword id="KW-0479">Metal-binding</keyword>
<keyword id="KW-0560">Oxidoreductase</keyword>
<keyword id="KW-1185">Reference proteome</keyword>
<reference key="1">
    <citation type="journal article" date="1995" name="Science">
        <title>Whole-genome random sequencing and assembly of Haemophilus influenzae Rd.</title>
        <authorList>
            <person name="Fleischmann R.D."/>
            <person name="Adams M.D."/>
            <person name="White O."/>
            <person name="Clayton R.A."/>
            <person name="Kirkness E.F."/>
            <person name="Kerlavage A.R."/>
            <person name="Bult C.J."/>
            <person name="Tomb J.-F."/>
            <person name="Dougherty B.A."/>
            <person name="Merrick J.M."/>
            <person name="McKenney K."/>
            <person name="Sutton G.G."/>
            <person name="FitzHugh W."/>
            <person name="Fields C.A."/>
            <person name="Gocayne J.D."/>
            <person name="Scott J.D."/>
            <person name="Shirley R."/>
            <person name="Liu L.-I."/>
            <person name="Glodek A."/>
            <person name="Kelley J.M."/>
            <person name="Weidman J.F."/>
            <person name="Phillips C.A."/>
            <person name="Spriggs T."/>
            <person name="Hedblom E."/>
            <person name="Cotton M.D."/>
            <person name="Utterback T.R."/>
            <person name="Hanna M.C."/>
            <person name="Nguyen D.T."/>
            <person name="Saudek D.M."/>
            <person name="Brandon R.C."/>
            <person name="Fine L.D."/>
            <person name="Fritchman J.L."/>
            <person name="Fuhrmann J.L."/>
            <person name="Geoghagen N.S.M."/>
            <person name="Gnehm C.L."/>
            <person name="McDonald L.A."/>
            <person name="Small K.V."/>
            <person name="Fraser C.M."/>
            <person name="Smith H.O."/>
            <person name="Venter J.C."/>
        </authorList>
    </citation>
    <scope>NUCLEOTIDE SEQUENCE [LARGE SCALE GENOMIC DNA]</scope>
    <source>
        <strain>ATCC 51907 / DSM 11121 / KW20 / Rd</strain>
    </source>
</reference>
<reference key="2">
    <citation type="journal article" date="2000" name="Electrophoresis">
        <title>Two-dimensional map of the proteome of Haemophilus influenzae.</title>
        <authorList>
            <person name="Langen H."/>
            <person name="Takacs B."/>
            <person name="Evers S."/>
            <person name="Berndt P."/>
            <person name="Lahm H.W."/>
            <person name="Wipf B."/>
            <person name="Gray C."/>
            <person name="Fountoulakis M."/>
        </authorList>
    </citation>
    <scope>IDENTIFICATION BY MASS SPECTROMETRY</scope>
    <source>
        <strain>ATCC 51907 / DSM 11121 / KW20 / Rd</strain>
    </source>
</reference>